<gene>
    <name evidence="1" type="primary">rplF</name>
    <name type="ordered locus">YPDSF_0148</name>
</gene>
<name>RL6_YERPP</name>
<protein>
    <recommendedName>
        <fullName evidence="1">Large ribosomal subunit protein uL6</fullName>
    </recommendedName>
    <alternativeName>
        <fullName evidence="2">50S ribosomal protein L6</fullName>
    </alternativeName>
</protein>
<proteinExistence type="inferred from homology"/>
<evidence type="ECO:0000255" key="1">
    <source>
        <dbReference type="HAMAP-Rule" id="MF_01365"/>
    </source>
</evidence>
<evidence type="ECO:0000305" key="2"/>
<reference key="1">
    <citation type="submission" date="2007-02" db="EMBL/GenBank/DDBJ databases">
        <title>Complete sequence of chromosome of Yersinia pestis Pestoides F.</title>
        <authorList>
            <consortium name="US DOE Joint Genome Institute"/>
            <person name="Copeland A."/>
            <person name="Lucas S."/>
            <person name="Lapidus A."/>
            <person name="Barry K."/>
            <person name="Detter J.C."/>
            <person name="Glavina del Rio T."/>
            <person name="Hammon N."/>
            <person name="Israni S."/>
            <person name="Dalin E."/>
            <person name="Tice H."/>
            <person name="Pitluck S."/>
            <person name="Di Bartolo G."/>
            <person name="Chain P."/>
            <person name="Malfatti S."/>
            <person name="Shin M."/>
            <person name="Vergez L."/>
            <person name="Schmutz J."/>
            <person name="Larimer F."/>
            <person name="Land M."/>
            <person name="Hauser L."/>
            <person name="Worsham P."/>
            <person name="Chu M."/>
            <person name="Bearden S."/>
            <person name="Garcia E."/>
            <person name="Richardson P."/>
        </authorList>
    </citation>
    <scope>NUCLEOTIDE SEQUENCE [LARGE SCALE GENOMIC DNA]</scope>
    <source>
        <strain>Pestoides F</strain>
    </source>
</reference>
<dbReference type="EMBL" id="CP000668">
    <property type="protein sequence ID" value="ABP38570.1"/>
    <property type="molecule type" value="Genomic_DNA"/>
</dbReference>
<dbReference type="RefSeq" id="WP_002213334.1">
    <property type="nucleotide sequence ID" value="NZ_CP009715.1"/>
</dbReference>
<dbReference type="SMR" id="A4TH07"/>
<dbReference type="GeneID" id="96663181"/>
<dbReference type="KEGG" id="ypp:YPDSF_0148"/>
<dbReference type="PATRIC" id="fig|386656.14.peg.419"/>
<dbReference type="GO" id="GO:0022625">
    <property type="term" value="C:cytosolic large ribosomal subunit"/>
    <property type="evidence" value="ECO:0007669"/>
    <property type="project" value="TreeGrafter"/>
</dbReference>
<dbReference type="GO" id="GO:0019843">
    <property type="term" value="F:rRNA binding"/>
    <property type="evidence" value="ECO:0007669"/>
    <property type="project" value="UniProtKB-UniRule"/>
</dbReference>
<dbReference type="GO" id="GO:0003735">
    <property type="term" value="F:structural constituent of ribosome"/>
    <property type="evidence" value="ECO:0007669"/>
    <property type="project" value="InterPro"/>
</dbReference>
<dbReference type="GO" id="GO:0002181">
    <property type="term" value="P:cytoplasmic translation"/>
    <property type="evidence" value="ECO:0007669"/>
    <property type="project" value="TreeGrafter"/>
</dbReference>
<dbReference type="FunFam" id="3.90.930.12:FF:000001">
    <property type="entry name" value="50S ribosomal protein L6"/>
    <property type="match status" value="1"/>
</dbReference>
<dbReference type="FunFam" id="3.90.930.12:FF:000002">
    <property type="entry name" value="50S ribosomal protein L6"/>
    <property type="match status" value="1"/>
</dbReference>
<dbReference type="Gene3D" id="3.90.930.12">
    <property type="entry name" value="Ribosomal protein L6, alpha-beta domain"/>
    <property type="match status" value="2"/>
</dbReference>
<dbReference type="HAMAP" id="MF_01365_B">
    <property type="entry name" value="Ribosomal_uL6_B"/>
    <property type="match status" value="1"/>
</dbReference>
<dbReference type="InterPro" id="IPR000702">
    <property type="entry name" value="Ribosomal_uL6-like"/>
</dbReference>
<dbReference type="InterPro" id="IPR036789">
    <property type="entry name" value="Ribosomal_uL6-like_a/b-dom_sf"/>
</dbReference>
<dbReference type="InterPro" id="IPR020040">
    <property type="entry name" value="Ribosomal_uL6_a/b-dom"/>
</dbReference>
<dbReference type="InterPro" id="IPR019906">
    <property type="entry name" value="Ribosomal_uL6_bac-type"/>
</dbReference>
<dbReference type="InterPro" id="IPR002358">
    <property type="entry name" value="Ribosomal_uL6_CS"/>
</dbReference>
<dbReference type="NCBIfam" id="TIGR03654">
    <property type="entry name" value="L6_bact"/>
    <property type="match status" value="1"/>
</dbReference>
<dbReference type="PANTHER" id="PTHR11655">
    <property type="entry name" value="60S/50S RIBOSOMAL PROTEIN L6/L9"/>
    <property type="match status" value="1"/>
</dbReference>
<dbReference type="PANTHER" id="PTHR11655:SF14">
    <property type="entry name" value="LARGE RIBOSOMAL SUBUNIT PROTEIN UL6M"/>
    <property type="match status" value="1"/>
</dbReference>
<dbReference type="Pfam" id="PF00347">
    <property type="entry name" value="Ribosomal_L6"/>
    <property type="match status" value="2"/>
</dbReference>
<dbReference type="PIRSF" id="PIRSF002162">
    <property type="entry name" value="Ribosomal_L6"/>
    <property type="match status" value="1"/>
</dbReference>
<dbReference type="PRINTS" id="PR00059">
    <property type="entry name" value="RIBOSOMALL6"/>
</dbReference>
<dbReference type="SUPFAM" id="SSF56053">
    <property type="entry name" value="Ribosomal protein L6"/>
    <property type="match status" value="2"/>
</dbReference>
<dbReference type="PROSITE" id="PS00525">
    <property type="entry name" value="RIBOSOMAL_L6_1"/>
    <property type="match status" value="1"/>
</dbReference>
<organism>
    <name type="scientific">Yersinia pestis (strain Pestoides F)</name>
    <dbReference type="NCBI Taxonomy" id="386656"/>
    <lineage>
        <taxon>Bacteria</taxon>
        <taxon>Pseudomonadati</taxon>
        <taxon>Pseudomonadota</taxon>
        <taxon>Gammaproteobacteria</taxon>
        <taxon>Enterobacterales</taxon>
        <taxon>Yersiniaceae</taxon>
        <taxon>Yersinia</taxon>
    </lineage>
</organism>
<keyword id="KW-0687">Ribonucleoprotein</keyword>
<keyword id="KW-0689">Ribosomal protein</keyword>
<keyword id="KW-0694">RNA-binding</keyword>
<keyword id="KW-0699">rRNA-binding</keyword>
<feature type="chain" id="PRO_1000055331" description="Large ribosomal subunit protein uL6">
    <location>
        <begin position="1"/>
        <end position="177"/>
    </location>
</feature>
<accession>A4TH07</accession>
<comment type="function">
    <text evidence="1">This protein binds to the 23S rRNA, and is important in its secondary structure. It is located near the subunit interface in the base of the L7/L12 stalk, and near the tRNA binding site of the peptidyltransferase center.</text>
</comment>
<comment type="subunit">
    <text evidence="1">Part of the 50S ribosomal subunit.</text>
</comment>
<comment type="similarity">
    <text evidence="1">Belongs to the universal ribosomal protein uL6 family.</text>
</comment>
<sequence>MSRVAKAPVVIPAGVEVKLNGQVISIKGKNGELTRTVHSAVEVKQEENTLTFAPREGAVDGWAQAGTTRALLNSMVIGVTEGFTKKLQLVGVGYRAAVKGNVVNLALGFSHPVDHELPAGITAECPTQTEIVLKGADKQVIGQVAADLRAYRRPEPYKGKGVRYADEVVRTKEAKKK</sequence>